<sequence>MKQLGKHIILELWGCENQALDDQPGIEKMLVDAVKACGATLICVKTHKFSPQGVTGVAVLSESHISIHTWPELGYAAMDVFTCGEHVAPHDTIPEIQKFLKPEKIDVMDIKRGIIEVDEVKE</sequence>
<accession>A6VHH1</accession>
<protein>
    <recommendedName>
        <fullName evidence="1">S-adenosylmethionine decarboxylase proenzyme</fullName>
        <shortName evidence="1">AdoMetDC</shortName>
        <shortName evidence="1">SAMDC</shortName>
        <ecNumber evidence="1">4.1.1.50</ecNumber>
    </recommendedName>
    <component>
        <recommendedName>
            <fullName evidence="1">S-adenosylmethionine decarboxylase beta chain</fullName>
        </recommendedName>
    </component>
    <component>
        <recommendedName>
            <fullName evidence="1">S-adenosylmethionine decarboxylase alpha chain</fullName>
        </recommendedName>
    </component>
</protein>
<organism>
    <name type="scientific">Methanococcus maripaludis (strain C7 / ATCC BAA-1331)</name>
    <dbReference type="NCBI Taxonomy" id="426368"/>
    <lineage>
        <taxon>Archaea</taxon>
        <taxon>Methanobacteriati</taxon>
        <taxon>Methanobacteriota</taxon>
        <taxon>Methanomada group</taxon>
        <taxon>Methanococci</taxon>
        <taxon>Methanococcales</taxon>
        <taxon>Methanococcaceae</taxon>
        <taxon>Methanococcus</taxon>
    </lineage>
</organism>
<gene>
    <name evidence="1" type="primary">speH</name>
    <name type="ordered locus">MmarC7_0830</name>
</gene>
<reference key="1">
    <citation type="submission" date="2007-06" db="EMBL/GenBank/DDBJ databases">
        <title>Complete sequence of Methanococcus maripaludis C7.</title>
        <authorList>
            <consortium name="US DOE Joint Genome Institute"/>
            <person name="Copeland A."/>
            <person name="Lucas S."/>
            <person name="Lapidus A."/>
            <person name="Barry K."/>
            <person name="Glavina del Rio T."/>
            <person name="Dalin E."/>
            <person name="Tice H."/>
            <person name="Pitluck S."/>
            <person name="Clum A."/>
            <person name="Schmutz J."/>
            <person name="Larimer F."/>
            <person name="Land M."/>
            <person name="Hauser L."/>
            <person name="Kyrpides N."/>
            <person name="Anderson I."/>
            <person name="Sieprawska-Lupa M."/>
            <person name="Whitman W.B."/>
            <person name="Richardson P."/>
        </authorList>
    </citation>
    <scope>NUCLEOTIDE SEQUENCE [LARGE SCALE GENOMIC DNA]</scope>
    <source>
        <strain>C7 / ATCC BAA-1331</strain>
    </source>
</reference>
<dbReference type="EC" id="4.1.1.50" evidence="1"/>
<dbReference type="EMBL" id="CP000745">
    <property type="protein sequence ID" value="ABR65897.1"/>
    <property type="molecule type" value="Genomic_DNA"/>
</dbReference>
<dbReference type="SMR" id="A6VHH1"/>
<dbReference type="STRING" id="426368.MmarC7_0830"/>
<dbReference type="KEGG" id="mmz:MmarC7_0830"/>
<dbReference type="eggNOG" id="arCOG00279">
    <property type="taxonomic scope" value="Archaea"/>
</dbReference>
<dbReference type="HOGENOM" id="CLU_125470_2_3_2"/>
<dbReference type="OrthoDB" id="114016at2157"/>
<dbReference type="UniPathway" id="UPA00331">
    <property type="reaction ID" value="UER00451"/>
</dbReference>
<dbReference type="GO" id="GO:0005829">
    <property type="term" value="C:cytosol"/>
    <property type="evidence" value="ECO:0007669"/>
    <property type="project" value="TreeGrafter"/>
</dbReference>
<dbReference type="GO" id="GO:0004014">
    <property type="term" value="F:adenosylmethionine decarboxylase activity"/>
    <property type="evidence" value="ECO:0007669"/>
    <property type="project" value="UniProtKB-UniRule"/>
</dbReference>
<dbReference type="GO" id="GO:0008295">
    <property type="term" value="P:spermidine biosynthetic process"/>
    <property type="evidence" value="ECO:0007669"/>
    <property type="project" value="UniProtKB-UniRule"/>
</dbReference>
<dbReference type="FunFam" id="3.30.360.110:FF:000001">
    <property type="entry name" value="S-adenosylmethionine decarboxylase proenzyme"/>
    <property type="match status" value="1"/>
</dbReference>
<dbReference type="Gene3D" id="3.30.160.750">
    <property type="match status" value="1"/>
</dbReference>
<dbReference type="Gene3D" id="3.30.360.110">
    <property type="entry name" value="S-adenosylmethionine decarboxylase domain"/>
    <property type="match status" value="1"/>
</dbReference>
<dbReference type="HAMAP" id="MF_00464">
    <property type="entry name" value="AdoMetDC_1"/>
    <property type="match status" value="1"/>
</dbReference>
<dbReference type="InterPro" id="IPR042286">
    <property type="entry name" value="AdoMetDC_C"/>
</dbReference>
<dbReference type="InterPro" id="IPR003826">
    <property type="entry name" value="AdoMetDC_fam_prok"/>
</dbReference>
<dbReference type="InterPro" id="IPR042284">
    <property type="entry name" value="AdoMetDC_N"/>
</dbReference>
<dbReference type="InterPro" id="IPR016067">
    <property type="entry name" value="S-AdoMet_deCO2ase_core"/>
</dbReference>
<dbReference type="InterPro" id="IPR017716">
    <property type="entry name" value="S-AdoMet_deCOase_pro-enz"/>
</dbReference>
<dbReference type="NCBIfam" id="TIGR03330">
    <property type="entry name" value="SAM_DCase_Bsu"/>
    <property type="match status" value="1"/>
</dbReference>
<dbReference type="PANTHER" id="PTHR33866">
    <property type="entry name" value="S-ADENOSYLMETHIONINE DECARBOXYLASE PROENZYME"/>
    <property type="match status" value="1"/>
</dbReference>
<dbReference type="PANTHER" id="PTHR33866:SF2">
    <property type="entry name" value="S-ADENOSYLMETHIONINE DECARBOXYLASE PROENZYME"/>
    <property type="match status" value="1"/>
</dbReference>
<dbReference type="Pfam" id="PF02675">
    <property type="entry name" value="AdoMet_dc"/>
    <property type="match status" value="1"/>
</dbReference>
<dbReference type="SUPFAM" id="SSF56276">
    <property type="entry name" value="S-adenosylmethionine decarboxylase"/>
    <property type="match status" value="1"/>
</dbReference>
<name>SPEH_METM7</name>
<keyword id="KW-0068">Autocatalytic cleavage</keyword>
<keyword id="KW-0210">Decarboxylase</keyword>
<keyword id="KW-0456">Lyase</keyword>
<keyword id="KW-0620">Polyamine biosynthesis</keyword>
<keyword id="KW-0670">Pyruvate</keyword>
<keyword id="KW-0949">S-adenosyl-L-methionine</keyword>
<keyword id="KW-0704">Schiff base</keyword>
<keyword id="KW-0745">Spermidine biosynthesis</keyword>
<keyword id="KW-0865">Zymogen</keyword>
<feature type="chain" id="PRO_1000013677" description="S-adenosylmethionine decarboxylase beta chain" evidence="1">
    <location>
        <begin position="1"/>
        <end position="62"/>
    </location>
</feature>
<feature type="chain" id="PRO_0000315039" description="S-adenosylmethionine decarboxylase alpha chain" evidence="1">
    <location>
        <begin position="63"/>
        <end position="122"/>
    </location>
</feature>
<feature type="active site" description="Schiff-base intermediate with substrate; via pyruvic acid" evidence="1">
    <location>
        <position position="63"/>
    </location>
</feature>
<feature type="active site" description="Proton acceptor; for processing activity" evidence="1">
    <location>
        <position position="68"/>
    </location>
</feature>
<feature type="active site" description="Proton donor; for catalytic activity" evidence="1">
    <location>
        <position position="83"/>
    </location>
</feature>
<feature type="site" description="Cleavage (non-hydrolytic); by autolysis" evidence="1">
    <location>
        <begin position="62"/>
        <end position="63"/>
    </location>
</feature>
<feature type="modified residue" description="Pyruvic acid (Ser); by autocatalysis" evidence="1">
    <location>
        <position position="63"/>
    </location>
</feature>
<evidence type="ECO:0000255" key="1">
    <source>
        <dbReference type="HAMAP-Rule" id="MF_00464"/>
    </source>
</evidence>
<comment type="function">
    <text evidence="1">Catalyzes the decarboxylation of S-adenosylmethionine to S-adenosylmethioninamine (dcAdoMet), the propylamine donor required for the synthesis of the polyamines spermine and spermidine from the diamine putrescine.</text>
</comment>
<comment type="catalytic activity">
    <reaction evidence="1">
        <text>S-adenosyl-L-methionine + H(+) = S-adenosyl 3-(methylsulfanyl)propylamine + CO2</text>
        <dbReference type="Rhea" id="RHEA:15981"/>
        <dbReference type="ChEBI" id="CHEBI:15378"/>
        <dbReference type="ChEBI" id="CHEBI:16526"/>
        <dbReference type="ChEBI" id="CHEBI:57443"/>
        <dbReference type="ChEBI" id="CHEBI:59789"/>
        <dbReference type="EC" id="4.1.1.50"/>
    </reaction>
</comment>
<comment type="cofactor">
    <cofactor evidence="1">
        <name>pyruvate</name>
        <dbReference type="ChEBI" id="CHEBI:15361"/>
    </cofactor>
    <text evidence="1">Binds 1 pyruvoyl group covalently per subunit.</text>
</comment>
<comment type="pathway">
    <text evidence="1">Amine and polyamine biosynthesis; S-adenosylmethioninamine biosynthesis; S-adenosylmethioninamine from S-adenosyl-L-methionine: step 1/1.</text>
</comment>
<comment type="subunit">
    <text evidence="1">Heterotetramer of two alpha and two beta chains arranged as a dimer of alpha/beta heterodimers.</text>
</comment>
<comment type="PTM">
    <text evidence="1">Is synthesized initially as an inactive proenzyme. Formation of the active enzyme involves a self-maturation process in which the active site pyruvoyl group is generated from an internal serine residue via an autocatalytic post-translational modification. Two non-identical subunits are generated from the proenzyme in this reaction, and the pyruvate is formed at the N-terminus of the alpha chain, which is derived from the carboxyl end of the proenzyme. The post-translation cleavage follows an unusual pathway, termed non-hydrolytic serinolysis, in which the side chain hydroxyl group of the serine supplies its oxygen atom to form the C-terminus of the beta chain, while the remainder of the serine residue undergoes an oxidative deamination to produce ammonia and the pyruvoyl group blocking the N-terminus of the alpha chain.</text>
</comment>
<comment type="similarity">
    <text evidence="1">Belongs to the prokaryotic AdoMetDC family. Type 1 subfamily.</text>
</comment>
<proteinExistence type="inferred from homology"/>